<evidence type="ECO:0000255" key="1">
    <source>
        <dbReference type="HAMAP-Rule" id="MF_00141"/>
    </source>
</evidence>
<feature type="chain" id="PRO_0000094262" description="Elongation factor P">
    <location>
        <begin position="1"/>
        <end position="189"/>
    </location>
</feature>
<feature type="modified residue" description="N6-(3,6-diaminohexanoyl)-5-hydroxylysine" evidence="1">
    <location>
        <position position="34"/>
    </location>
</feature>
<comment type="function">
    <text evidence="1">Involved in peptide bond synthesis. Alleviates ribosome stalling that occurs when 3 or more consecutive Pro residues or the sequence PPG is present in a protein, possibly by augmenting the peptidyl transferase activity of the ribosome. Modification of Lys-34 is required for alleviation.</text>
</comment>
<comment type="pathway">
    <text evidence="1">Protein biosynthesis; polypeptide chain elongation.</text>
</comment>
<comment type="subcellular location">
    <subcellularLocation>
        <location evidence="1">Cytoplasm</location>
    </subcellularLocation>
</comment>
<comment type="PTM">
    <text evidence="1">May be beta-lysylated on the epsilon-amino group of Lys-34 by the combined action of EpmA and EpmB, and then hydroxylated on the C5 position of the same residue by EpmC (if this protein is present). Lysylation is critical for the stimulatory effect of EF-P on peptide-bond formation. The lysylation moiety may extend toward the peptidyltransferase center and stabilize the terminal 3-CCA end of the tRNA. Hydroxylation of the C5 position on Lys-34 may allow additional potential stabilizing hydrogen-bond interactions with the P-tRNA.</text>
</comment>
<comment type="similarity">
    <text evidence="1">Belongs to the elongation factor P family.</text>
</comment>
<name>EFP_IDILO</name>
<accession>Q5QVT8</accession>
<proteinExistence type="inferred from homology"/>
<protein>
    <recommendedName>
        <fullName evidence="1">Elongation factor P</fullName>
        <shortName evidence="1">EF-P</shortName>
    </recommendedName>
</protein>
<gene>
    <name evidence="1" type="primary">efp</name>
    <name type="ordered locus">IL2276</name>
</gene>
<dbReference type="EMBL" id="AE017340">
    <property type="protein sequence ID" value="AAV83108.1"/>
    <property type="molecule type" value="Genomic_DNA"/>
</dbReference>
<dbReference type="RefSeq" id="WP_011235502.1">
    <property type="nucleotide sequence ID" value="NC_006512.1"/>
</dbReference>
<dbReference type="SMR" id="Q5QVT8"/>
<dbReference type="STRING" id="283942.IL2276"/>
<dbReference type="GeneID" id="78252977"/>
<dbReference type="KEGG" id="ilo:IL2276"/>
<dbReference type="eggNOG" id="COG0231">
    <property type="taxonomic scope" value="Bacteria"/>
</dbReference>
<dbReference type="HOGENOM" id="CLU_074944_0_0_6"/>
<dbReference type="OrthoDB" id="9801844at2"/>
<dbReference type="UniPathway" id="UPA00345"/>
<dbReference type="Proteomes" id="UP000001171">
    <property type="component" value="Chromosome"/>
</dbReference>
<dbReference type="GO" id="GO:0005737">
    <property type="term" value="C:cytoplasm"/>
    <property type="evidence" value="ECO:0007669"/>
    <property type="project" value="UniProtKB-SubCell"/>
</dbReference>
<dbReference type="GO" id="GO:0003746">
    <property type="term" value="F:translation elongation factor activity"/>
    <property type="evidence" value="ECO:0007669"/>
    <property type="project" value="UniProtKB-UniRule"/>
</dbReference>
<dbReference type="GO" id="GO:0043043">
    <property type="term" value="P:peptide biosynthetic process"/>
    <property type="evidence" value="ECO:0007669"/>
    <property type="project" value="InterPro"/>
</dbReference>
<dbReference type="CDD" id="cd04470">
    <property type="entry name" value="S1_EF-P_repeat_1"/>
    <property type="match status" value="1"/>
</dbReference>
<dbReference type="CDD" id="cd05794">
    <property type="entry name" value="S1_EF-P_repeat_2"/>
    <property type="match status" value="1"/>
</dbReference>
<dbReference type="FunFam" id="2.30.30.30:FF:000003">
    <property type="entry name" value="Elongation factor P"/>
    <property type="match status" value="1"/>
</dbReference>
<dbReference type="FunFam" id="2.40.50.140:FF:000004">
    <property type="entry name" value="Elongation factor P"/>
    <property type="match status" value="1"/>
</dbReference>
<dbReference type="FunFam" id="2.40.50.140:FF:000009">
    <property type="entry name" value="Elongation factor P"/>
    <property type="match status" value="1"/>
</dbReference>
<dbReference type="Gene3D" id="2.30.30.30">
    <property type="match status" value="1"/>
</dbReference>
<dbReference type="Gene3D" id="2.40.50.140">
    <property type="entry name" value="Nucleic acid-binding proteins"/>
    <property type="match status" value="2"/>
</dbReference>
<dbReference type="HAMAP" id="MF_00141">
    <property type="entry name" value="EF_P"/>
    <property type="match status" value="1"/>
</dbReference>
<dbReference type="InterPro" id="IPR015365">
    <property type="entry name" value="Elong-fact-P_C"/>
</dbReference>
<dbReference type="InterPro" id="IPR012340">
    <property type="entry name" value="NA-bd_OB-fold"/>
</dbReference>
<dbReference type="InterPro" id="IPR014722">
    <property type="entry name" value="Rib_uL2_dom2"/>
</dbReference>
<dbReference type="InterPro" id="IPR020599">
    <property type="entry name" value="Transl_elong_fac_P/YeiP"/>
</dbReference>
<dbReference type="InterPro" id="IPR013185">
    <property type="entry name" value="Transl_elong_KOW-like"/>
</dbReference>
<dbReference type="InterPro" id="IPR001059">
    <property type="entry name" value="Transl_elong_P/YeiP_cen"/>
</dbReference>
<dbReference type="InterPro" id="IPR013852">
    <property type="entry name" value="Transl_elong_P/YeiP_CS"/>
</dbReference>
<dbReference type="InterPro" id="IPR011768">
    <property type="entry name" value="Transl_elongation_fac_P"/>
</dbReference>
<dbReference type="InterPro" id="IPR008991">
    <property type="entry name" value="Translation_prot_SH3-like_sf"/>
</dbReference>
<dbReference type="NCBIfam" id="TIGR00038">
    <property type="entry name" value="efp"/>
    <property type="match status" value="1"/>
</dbReference>
<dbReference type="NCBIfam" id="NF001810">
    <property type="entry name" value="PRK00529.1"/>
    <property type="match status" value="1"/>
</dbReference>
<dbReference type="PANTHER" id="PTHR30053">
    <property type="entry name" value="ELONGATION FACTOR P"/>
    <property type="match status" value="1"/>
</dbReference>
<dbReference type="PANTHER" id="PTHR30053:SF12">
    <property type="entry name" value="ELONGATION FACTOR P (EF-P) FAMILY PROTEIN"/>
    <property type="match status" value="1"/>
</dbReference>
<dbReference type="Pfam" id="PF01132">
    <property type="entry name" value="EFP"/>
    <property type="match status" value="1"/>
</dbReference>
<dbReference type="Pfam" id="PF08207">
    <property type="entry name" value="EFP_N"/>
    <property type="match status" value="1"/>
</dbReference>
<dbReference type="Pfam" id="PF09285">
    <property type="entry name" value="Elong-fact-P_C"/>
    <property type="match status" value="1"/>
</dbReference>
<dbReference type="PIRSF" id="PIRSF005901">
    <property type="entry name" value="EF-P"/>
    <property type="match status" value="1"/>
</dbReference>
<dbReference type="SMART" id="SM01185">
    <property type="entry name" value="EFP"/>
    <property type="match status" value="1"/>
</dbReference>
<dbReference type="SMART" id="SM00841">
    <property type="entry name" value="Elong-fact-P_C"/>
    <property type="match status" value="1"/>
</dbReference>
<dbReference type="SUPFAM" id="SSF50249">
    <property type="entry name" value="Nucleic acid-binding proteins"/>
    <property type="match status" value="2"/>
</dbReference>
<dbReference type="SUPFAM" id="SSF50104">
    <property type="entry name" value="Translation proteins SH3-like domain"/>
    <property type="match status" value="1"/>
</dbReference>
<dbReference type="PROSITE" id="PS01275">
    <property type="entry name" value="EFP"/>
    <property type="match status" value="1"/>
</dbReference>
<reference key="1">
    <citation type="journal article" date="2004" name="Proc. Natl. Acad. Sci. U.S.A.">
        <title>Genome sequence of the deep-sea gamma-proteobacterium Idiomarina loihiensis reveals amino acid fermentation as a source of carbon and energy.</title>
        <authorList>
            <person name="Hou S."/>
            <person name="Saw J.H."/>
            <person name="Lee K.S."/>
            <person name="Freitas T.A."/>
            <person name="Belisle C."/>
            <person name="Kawarabayasi Y."/>
            <person name="Donachie S.P."/>
            <person name="Pikina A."/>
            <person name="Galperin M.Y."/>
            <person name="Koonin E.V."/>
            <person name="Makarova K.S."/>
            <person name="Omelchenko M.V."/>
            <person name="Sorokin A."/>
            <person name="Wolf Y.I."/>
            <person name="Li Q.X."/>
            <person name="Keum Y.S."/>
            <person name="Campbell S."/>
            <person name="Denery J."/>
            <person name="Aizawa S."/>
            <person name="Shibata S."/>
            <person name="Malahoff A."/>
            <person name="Alam M."/>
        </authorList>
    </citation>
    <scope>NUCLEOTIDE SEQUENCE [LARGE SCALE GENOMIC DNA]</scope>
    <source>
        <strain>ATCC BAA-735 / DSM 15497 / L2-TR</strain>
    </source>
</reference>
<sequence>MANYSTSEFKGGLKIMQDGEPCSIVENEMVKPGKGQAFNRVKIRKLISGKVVEKTFKSGESVEGADVIELELSYLYNDGEFWHFMNNETFEQVPADEKAVGEAEKWLVEQDVCTLTLWEGKPINVQPPNFVELEITETDPGLKGDTAGTGGKPATLSTGAVVRVPLFVQIGEVIKVDTRSGEYVSRVQK</sequence>
<organism>
    <name type="scientific">Idiomarina loihiensis (strain ATCC BAA-735 / DSM 15497 / L2-TR)</name>
    <dbReference type="NCBI Taxonomy" id="283942"/>
    <lineage>
        <taxon>Bacteria</taxon>
        <taxon>Pseudomonadati</taxon>
        <taxon>Pseudomonadota</taxon>
        <taxon>Gammaproteobacteria</taxon>
        <taxon>Alteromonadales</taxon>
        <taxon>Idiomarinaceae</taxon>
        <taxon>Idiomarina</taxon>
    </lineage>
</organism>
<keyword id="KW-0963">Cytoplasm</keyword>
<keyword id="KW-0251">Elongation factor</keyword>
<keyword id="KW-0379">Hydroxylation</keyword>
<keyword id="KW-0648">Protein biosynthesis</keyword>
<keyword id="KW-1185">Reference proteome</keyword>